<protein>
    <recommendedName>
        <fullName>Uncharacterized 3.4 kDa protein in atpE-petA intergenic region</fullName>
    </recommendedName>
    <alternativeName>
        <fullName>ORF27</fullName>
    </alternativeName>
</protein>
<comment type="subcellular location">
    <subcellularLocation>
        <location>Plastid</location>
        <location>Cyanelle</location>
    </subcellularLocation>
</comment>
<dbReference type="EMBL" id="U30821">
    <property type="protein sequence ID" value="AAA81274.1"/>
    <property type="molecule type" value="Genomic_DNA"/>
</dbReference>
<dbReference type="PIR" id="T06931">
    <property type="entry name" value="T06931"/>
</dbReference>
<dbReference type="RefSeq" id="NP_043243.1">
    <property type="nucleotide sequence ID" value="NC_001675.1"/>
</dbReference>
<dbReference type="SMR" id="P48328"/>
<dbReference type="GeneID" id="801663"/>
<dbReference type="GO" id="GO:0009842">
    <property type="term" value="C:cyanelle"/>
    <property type="evidence" value="ECO:0007669"/>
    <property type="project" value="UniProtKB-SubCell"/>
</dbReference>
<proteinExistence type="predicted"/>
<organism>
    <name type="scientific">Cyanophora paradoxa</name>
    <dbReference type="NCBI Taxonomy" id="2762"/>
    <lineage>
        <taxon>Eukaryota</taxon>
        <taxon>Glaucocystophyceae</taxon>
        <taxon>Cyanophoraceae</taxon>
        <taxon>Cyanophora</taxon>
    </lineage>
</organism>
<keyword id="KW-0194">Cyanelle</keyword>
<keyword id="KW-0934">Plastid</keyword>
<name>YCX7_CYAPA</name>
<geneLocation type="cyanelle"/>
<sequence length="27" mass="3442">MLIYYLQSEKVLFFLYIFLLNFKLRIL</sequence>
<accession>P48328</accession>
<reference key="1">
    <citation type="journal article" date="1995" name="Plant Mol. Biol. Rep.">
        <title>Nucleotide sequence of the cyanelle DNA from Cyanophora paradoxa.</title>
        <authorList>
            <person name="Stirewalt V.L."/>
            <person name="Michalowski C.B."/>
            <person name="Loeffelhardt W."/>
            <person name="Bohnert H.J."/>
            <person name="Bryant D.A."/>
        </authorList>
    </citation>
    <scope>NUCLEOTIDE SEQUENCE [LARGE SCALE GENOMIC DNA]</scope>
    <source>
        <strain>UTEX LB 555 / Pringsheim</strain>
    </source>
</reference>
<reference key="2">
    <citation type="book" date="1997" name="Eukaryotism and symbiosis">
        <title>The complete sequence of the cyanelle genome of Cyanophora paradoxa: the genetic complexity of a primitive plastid.</title>
        <editorList>
            <person name="Schenk H.E.A."/>
            <person name="Herrmann R."/>
            <person name="Jeon K.W."/>
            <person name="Mueller N.E."/>
            <person name="Schwemmler W."/>
        </editorList>
        <authorList>
            <person name="Loeffelhardt W."/>
            <person name="Stirewalt V.L."/>
            <person name="Michalowski C.B."/>
            <person name="Annarella M."/>
            <person name="Farley J.Y."/>
            <person name="Schluchter W.M."/>
            <person name="Chung S."/>
            <person name="Newmann-Spallart C."/>
            <person name="Steiner J.M."/>
            <person name="Jakowitsch J."/>
            <person name="Bohnert H.J."/>
            <person name="Bryant D.A."/>
        </authorList>
    </citation>
    <scope>NUCLEOTIDE SEQUENCE [LARGE SCALE GENOMIC DNA]</scope>
    <source>
        <strain>UTEX LB 555 / Pringsheim</strain>
    </source>
</reference>
<feature type="chain" id="PRO_0000217429" description="Uncharacterized 3.4 kDa protein in atpE-petA intergenic region">
    <location>
        <begin position="1"/>
        <end position="27"/>
    </location>
</feature>